<feature type="chain" id="PRO_0000445712" description="Non-toxic nonhemagglutinin type D">
    <location>
        <begin position="1"/>
        <end position="1196"/>
    </location>
</feature>
<feature type="region of interest" description="Light chain nLC" evidence="4">
    <location>
        <begin position="1"/>
        <end position="408"/>
    </location>
</feature>
<feature type="region of interest" description="N-heavy chain nHN" evidence="4">
    <location>
        <begin position="409"/>
        <end position="828"/>
    </location>
</feature>
<feature type="region of interest" description="C-heavy chain nHC" evidence="4">
    <location>
        <begin position="829"/>
        <end position="1195"/>
    </location>
</feature>
<feature type="disulfide bond" evidence="7">
    <location>
        <begin position="583"/>
        <end position="754"/>
    </location>
</feature>
<organismHost>
    <name type="scientific">Clostridium botulinum</name>
    <dbReference type="NCBI Taxonomy" id="1491"/>
</organismHost>
<gene>
    <name type="primary">ntnha</name>
    <name type="synonym">ntnh</name>
</gene>
<accession>Q9LBR2</accession>
<protein>
    <recommendedName>
        <fullName>Non-toxic nonhemagglutinin type D</fullName>
        <shortName>NTNHA</shortName>
    </recommendedName>
    <alternativeName>
        <fullName>Botulinum neurotoxin type D non-toxic component</fullName>
    </alternativeName>
</protein>
<keyword id="KW-0002">3D-structure</keyword>
<keyword id="KW-0903">Direct protein sequencing</keyword>
<keyword id="KW-1015">Disulfide bond</keyword>
<keyword id="KW-0964">Secreted</keyword>
<keyword id="KW-0843">Virulence</keyword>
<comment type="function">
    <text evidence="1">Assembles with botulinum neurotoxin type D (BoNT/D) and protects it against pH-mediated inactivation or protease activity at pH 2.6 (the pH of the animal gastrointestinal tract) but not at pH 6.0. The non-toxic component is necessary to maintain toxicity.</text>
</comment>
<comment type="subunit">
    <text evidence="1 2 3 5">Forms a highly interlocked heterodimer with botulinum neurotoxin type C at pH 6.0 but not at pH 7.5 (By similarity). Botulinum toxins are produced as progenitor toxins of large molecular sizes of 12S (M toxin) and 16S (L toxin). M toxin consists of a non-toxic, non-hemagglutinin component (NTNHA) and the neurotoxin (PubMed:11713244, PubMed:17581814, PubMed:8569530). L toxin consists of the M toxin and the 3 subcomponents of hemagglutinin (HA) (PubMed:17581814, PubMed:8569530). HA is composed of subcomponents of 70, 33, and 17 kDa. Erythrocyte agglutination occurs when the entire complex is assembled (PubMed:17581814). The stoichiometry of the whole complex has been modeled as one BoNT/D, one NTNHA, three HA-70, six HA-33 and three HA-17 (PubMed:17581814).</text>
</comment>
<comment type="subcellular location">
    <subcellularLocation>
        <location evidence="2 3 5">Secreted</location>
    </subcellularLocation>
</comment>
<comment type="domain">
    <text evidence="4">Has 3 domains that are structurally very similar to those in BoNT/D; light chain (nLC, equivalent to the light chain), N-heavy chain (nHN) and C-heavy chain (nHC).</text>
</comment>
<comment type="miscellaneous">
    <text evidence="6">This protein can also be encoded on a prophage.</text>
</comment>
<comment type="similarity">
    <text evidence="6">Belongs to the botulism non-toxic nonhemagglutinin family.</text>
</comment>
<organism>
    <name type="scientific">Clostridium botulinum D phage</name>
    <name type="common">Clostridium botulinum D bacteriophage</name>
    <dbReference type="NCBI Taxonomy" id="29342"/>
    <lineage>
        <taxon>Viruses</taxon>
        <taxon>Duplodnaviria</taxon>
        <taxon>Heunggongvirae</taxon>
        <taxon>Uroviricota</taxon>
        <taxon>Caudoviricetes</taxon>
    </lineage>
</organism>
<reference key="1">
    <citation type="journal article" date="1995" name="Microbiol. Immunol.">
        <title>Characterization of nontoxic-nonhemagglutinin component of the two types of progenitor toxin (M and L) produced by Clostridium botulinum type D CB-16.</title>
        <authorList>
            <person name="Ohyama T."/>
            <person name="Watanabe T."/>
            <person name="Fujinaga Y."/>
            <person name="Inoue K."/>
            <person name="Sunagawa H."/>
            <person name="Fujii N."/>
            <person name="Oguma K."/>
        </authorList>
    </citation>
    <scope>PROTEIN SEQUENCE OF 1-20 AND 141-157</scope>
    <scope>SUBUNIT</scope>
    <scope>SUBCELLULAR LOCATION</scope>
    <source>
        <strain>CB-16 / Type D / phage d-16 phi</strain>
    </source>
</reference>
<reference key="2">
    <citation type="journal article" date="2002" name="J. Biol. Chem.">
        <title>In vitro reconstitution of the Clostridium botulinum type D progenitor toxin.</title>
        <authorList>
            <person name="Kouguchi H."/>
            <person name="Watanabe T."/>
            <person name="Sagane Y."/>
            <person name="Sunagawa H."/>
            <person name="Ohyama T."/>
        </authorList>
    </citation>
    <scope>NUCLEOTIDE SEQUENCE [GENOMIC DNA]</scope>
    <scope>PROTEIN SEQUENCE OF 1-10 AND 135-151</scope>
    <scope>SUBUNIT</scope>
    <scope>SUBCELLULAR LOCATION</scope>
    <source>
        <strain>D-4947 / Type D</strain>
    </source>
</reference>
<reference key="3">
    <citation type="journal article" date="2007" name="J. Biol. Chem.">
        <title>A novel subunit structure of Clostridium botulinum serotype D toxin complex with three extended arms.</title>
        <authorList>
            <person name="Hasegawa K."/>
            <person name="Watanabe T."/>
            <person name="Suzuki T."/>
            <person name="Yamano A."/>
            <person name="Oikawa T."/>
            <person name="Sato Y."/>
            <person name="Kouguchi H."/>
            <person name="Yoneyama T."/>
            <person name="Niwa K."/>
            <person name="Ikeda T."/>
            <person name="Ohyama T."/>
        </authorList>
    </citation>
    <scope>SUBUNIT</scope>
    <scope>SUBCELLULAR LOCATION</scope>
    <source>
        <strain>D-4947 / Type D</strain>
    </source>
</reference>
<reference evidence="7" key="4">
    <citation type="journal article" date="2012" name="Biochem. Biophys. Res. Commun.">
        <title>Small-angle X-ray scattering reveals structural dynamics of the botulinum neurotoxin associating protein, non-toxic nonhemagglutinin.</title>
        <authorList>
            <person name="Sagane Y."/>
            <person name="Miyashita S."/>
            <person name="Miyata K."/>
            <person name="Matsumoto T."/>
            <person name="Inui K."/>
            <person name="Hayashi S."/>
            <person name="Suzuki T."/>
            <person name="Hasegawa K."/>
            <person name="Yajima S."/>
            <person name="Yamano A."/>
            <person name="Niwa K."/>
            <person name="Watanabe T."/>
        </authorList>
    </citation>
    <scope>X-RAY CRYSTALLOGRAPHY (3.90 ANGSTROMS)</scope>
    <scope>DOMAIN</scope>
    <scope>DISULFIDE BONDS</scope>
    <source>
        <strain>D-4947 / Type D</strain>
    </source>
</reference>
<evidence type="ECO:0000250" key="1">
    <source>
        <dbReference type="UniProtKB" id="Q45914"/>
    </source>
</evidence>
<evidence type="ECO:0000269" key="2">
    <source>
    </source>
</evidence>
<evidence type="ECO:0000269" key="3">
    <source>
    </source>
</evidence>
<evidence type="ECO:0000269" key="4">
    <source>
    </source>
</evidence>
<evidence type="ECO:0000269" key="5">
    <source>
    </source>
</evidence>
<evidence type="ECO:0000305" key="6"/>
<evidence type="ECO:0007744" key="7">
    <source>
        <dbReference type="PDB" id="3VUO"/>
    </source>
</evidence>
<name>BXDN_CBDP</name>
<sequence length="1196" mass="138455">MDINDDLNINSPVDNKNVVIVRARKTNTFFKAFKVAPNIWVAPERYYGEPLDIAEEYKLDGGIYDSNFLSQDSERENFLQAIITLLKRINNTISGKQLLSLISTAIPFPYGYVGGGYSSPNIFTFGKTPKSNKKLNSLVTSTIPFPFGGYRETNYIESQNNKNFYASNIVIFGPGSNIVENNVICYKKNDAENGMGTMAEILFQPLLTYKYNKFYIDPAMELTKCLIKSLYFLYGIKPSDDLVVPYRLRTELDNKQFSQLNIIDLLISGGVDLEFINTNPYWFTNSYFSNSIKMFEKYKNIYETEIEGNNAIGNDIKLRLKQKFQNSVQDIWNLNLNYFSKEFNSIIPDRFSNALKHFYRKQYYTMDYGDNYNINGFVNGQINTKLPLSDKNTNIISKPEKVVNLVNANNISLMKSNIYGDGLKGTTEDFYSTYKIPYNEEYEYRFNDSDNFPLNNISIEEVDSIPEIIDINPYKDNSDDLLFTQITSTTEEVITHTALPVNYLQAQIITNENFTLSSDFSKVVSSKDKSLVYSFLDNLMSYLETIKNDGPIDTDKKYYLWLKEVFKNYSFDINLTQEIDSSCGINEVVIWFGKALNILNTSNSFVEEYQNSGPISLISKKDNLSEPNIEIDDIPDSLLGLSFKDLNNKLYEIYSKNRVYFRKIYFNFLDQWWTEYYSQYFELICMAKQSILAQESVVKQIIQNKFTDLSKASIPPDTLKLIKETTEKTFIDLSNESQISMNRVDNFLNKASICVFVEDIYPKFISYMEKYINNINIKTREFIQRCTNINDNEKSILINSYTFKTIDFKFLNIQAIKNFFNSQVEQVMKEMLSPYQLLLFATRGPNSNIIEDISGKNTLIQYTESVELVYGVNGESLYLKSPNETVEFSNNFFTNGLTNNFTICFWLRFTGKDDDKTRLIGNKVNNCGWEIYFEDNGLVFEIIDSNGNQESVYLSNVINNNWYYISISVDRLKDQLLIFINDKNVANVSIEQILNIYSTNVISLVNKNNSIYVEELSVLDKPVASEEVIRNYFSYLDNSYIRDSSKSLLEYNKNYQLYNYVFPETSLYEVNDNNKSYLSLKNTDGINIPSVKFKLINIDESKGYVQKWDECIICVSDGTEKYLDISPENNRIQLVSSKDNAKKITVNTDLFRPDCITFSYNDKYFSLSLRDGDYNWMICNDNNKVPKGAHLWILKS</sequence>
<proteinExistence type="evidence at protein level"/>
<dbReference type="EMBL" id="AB037920">
    <property type="protein sequence ID" value="BAA90660.1"/>
    <property type="molecule type" value="Genomic_DNA"/>
</dbReference>
<dbReference type="PDB" id="3VUO">
    <property type="method" value="X-ray"/>
    <property type="resolution" value="3.90 A"/>
    <property type="chains" value="A=1-1196"/>
</dbReference>
<dbReference type="PDBsum" id="3VUO"/>
<dbReference type="SMR" id="Q9LBR2"/>
<dbReference type="PATRIC" id="fig|1491.434.peg.22"/>
<dbReference type="EvolutionaryTrace" id="Q9LBR2"/>
<dbReference type="GO" id="GO:0005576">
    <property type="term" value="C:extracellular region"/>
    <property type="evidence" value="ECO:0007669"/>
    <property type="project" value="UniProtKB-SubCell"/>
</dbReference>
<dbReference type="GO" id="GO:0004222">
    <property type="term" value="F:metalloendopeptidase activity"/>
    <property type="evidence" value="ECO:0007669"/>
    <property type="project" value="InterPro"/>
</dbReference>
<dbReference type="GO" id="GO:0008270">
    <property type="term" value="F:zinc ion binding"/>
    <property type="evidence" value="ECO:0007669"/>
    <property type="project" value="InterPro"/>
</dbReference>
<dbReference type="GO" id="GO:0006508">
    <property type="term" value="P:proteolysis"/>
    <property type="evidence" value="ECO:0007669"/>
    <property type="project" value="InterPro"/>
</dbReference>
<dbReference type="Gene3D" id="2.60.120.200">
    <property type="match status" value="1"/>
</dbReference>
<dbReference type="Gene3D" id="2.80.10.50">
    <property type="match status" value="1"/>
</dbReference>
<dbReference type="Gene3D" id="1.20.1120.10">
    <property type="entry name" value="Clostridium botulinum neurotoxin b, 'coiled-coil' domain"/>
    <property type="match status" value="1"/>
</dbReference>
<dbReference type="Gene3D" id="3.90.1240.10">
    <property type="entry name" value="Metalloproteases ('zincins'), catalytic domain like"/>
    <property type="match status" value="1"/>
</dbReference>
<dbReference type="InterPro" id="IPR000395">
    <property type="entry name" value="Bot/tetX_LC"/>
</dbReference>
<dbReference type="InterPro" id="IPR036248">
    <property type="entry name" value="Clostridium_toxin_transloc"/>
</dbReference>
<dbReference type="InterPro" id="IPR013320">
    <property type="entry name" value="ConA-like_dom_sf"/>
</dbReference>
<dbReference type="InterPro" id="IPR013677">
    <property type="entry name" value="Nontoxic_nonhemagglutn_C"/>
</dbReference>
<dbReference type="InterPro" id="IPR012928">
    <property type="entry name" value="Toxin_rcpt-bd_N"/>
</dbReference>
<dbReference type="NCBIfam" id="NF033911">
    <property type="entry name" value="botu_NTNH"/>
    <property type="match status" value="1"/>
</dbReference>
<dbReference type="Pfam" id="PF08470">
    <property type="entry name" value="NTNH_C"/>
    <property type="match status" value="1"/>
</dbReference>
<dbReference type="Pfam" id="PF01742">
    <property type="entry name" value="Peptidase_M27"/>
    <property type="match status" value="1"/>
</dbReference>
<dbReference type="Pfam" id="PF22133">
    <property type="entry name" value="Toxin_BN_H"/>
    <property type="match status" value="1"/>
</dbReference>
<dbReference type="Pfam" id="PF07953">
    <property type="entry name" value="Toxin_R_bind_N"/>
    <property type="match status" value="1"/>
</dbReference>
<dbReference type="PRINTS" id="PR00760">
    <property type="entry name" value="BONTOXILYSIN"/>
</dbReference>
<dbReference type="SUPFAM" id="SSF58091">
    <property type="entry name" value="Clostridium neurotoxins, 'coiled-coil' domain"/>
    <property type="match status" value="1"/>
</dbReference>
<dbReference type="SUPFAM" id="SSF49899">
    <property type="entry name" value="Concanavalin A-like lectins/glucanases"/>
    <property type="match status" value="1"/>
</dbReference>
<dbReference type="SUPFAM" id="SSF55486">
    <property type="entry name" value="Metalloproteases ('zincins'), catalytic domain"/>
    <property type="match status" value="1"/>
</dbReference>